<protein>
    <recommendedName>
        <fullName evidence="6">PtdIns3K complex I subunit atg38</fullName>
    </recommendedName>
    <alternativeName>
        <fullName evidence="5">Autophagy-related protein 38</fullName>
    </alternativeName>
</protein>
<dbReference type="EMBL" id="U14913">
    <property type="protein sequence ID" value="AAB67441.1"/>
    <property type="status" value="ALT_SEQ"/>
    <property type="molecule type" value="Genomic_DNA"/>
</dbReference>
<dbReference type="EMBL" id="BK006945">
    <property type="protein sequence ID" value="DAA09528.1"/>
    <property type="molecule type" value="Genomic_DNA"/>
</dbReference>
<dbReference type="PIR" id="S48562">
    <property type="entry name" value="S48562"/>
</dbReference>
<dbReference type="RefSeq" id="NP_013312.2">
    <property type="nucleotide sequence ID" value="NM_001182098.1"/>
</dbReference>
<dbReference type="PDB" id="5KC1">
    <property type="method" value="X-ray"/>
    <property type="resolution" value="2.20 A"/>
    <property type="chains" value="A/B/C/D/E/F/G/H/I/J/K/L=1-226"/>
</dbReference>
<dbReference type="PDBsum" id="5KC1"/>
<dbReference type="SMR" id="Q05789"/>
<dbReference type="BioGRID" id="31479">
    <property type="interactions" value="40"/>
</dbReference>
<dbReference type="ComplexPortal" id="CPX-1881">
    <property type="entry name" value="Phosphatidylinositol 3-kinase complex, class III, type I"/>
</dbReference>
<dbReference type="DIP" id="DIP-4299N"/>
<dbReference type="FunCoup" id="Q05789">
    <property type="interactions" value="61"/>
</dbReference>
<dbReference type="IntAct" id="Q05789">
    <property type="interactions" value="7"/>
</dbReference>
<dbReference type="MINT" id="Q05789"/>
<dbReference type="STRING" id="4932.YLR211C"/>
<dbReference type="iPTMnet" id="Q05789"/>
<dbReference type="PaxDb" id="4932-YLR211C"/>
<dbReference type="PeptideAtlas" id="Q05789"/>
<dbReference type="EnsemblFungi" id="YLR211C_mRNA">
    <property type="protein sequence ID" value="YLR211C"/>
    <property type="gene ID" value="YLR211C"/>
</dbReference>
<dbReference type="GeneID" id="850908"/>
<dbReference type="KEGG" id="sce:YLR211C"/>
<dbReference type="AGR" id="SGD:S000004201"/>
<dbReference type="SGD" id="S000004201">
    <property type="gene designation" value="ATG38"/>
</dbReference>
<dbReference type="VEuPathDB" id="FungiDB:YLR211C"/>
<dbReference type="eggNOG" id="ENOG502S4WG">
    <property type="taxonomic scope" value="Eukaryota"/>
</dbReference>
<dbReference type="HOGENOM" id="CLU_107237_0_0_1"/>
<dbReference type="InParanoid" id="Q05789"/>
<dbReference type="OMA" id="NARNWDN"/>
<dbReference type="OrthoDB" id="4034212at2759"/>
<dbReference type="BioCyc" id="YEAST:G3O-32328-MONOMER"/>
<dbReference type="BioGRID-ORCS" id="850908">
    <property type="hits" value="0 hits in 10 CRISPR screens"/>
</dbReference>
<dbReference type="PRO" id="PR:Q05789"/>
<dbReference type="Proteomes" id="UP000002311">
    <property type="component" value="Chromosome XII"/>
</dbReference>
<dbReference type="RNAct" id="Q05789">
    <property type="molecule type" value="protein"/>
</dbReference>
<dbReference type="GO" id="GO:0005737">
    <property type="term" value="C:cytoplasm"/>
    <property type="evidence" value="ECO:0007005"/>
    <property type="project" value="SGD"/>
</dbReference>
<dbReference type="GO" id="GO:0000407">
    <property type="term" value="C:phagophore assembly site"/>
    <property type="evidence" value="ECO:0000314"/>
    <property type="project" value="SGD"/>
</dbReference>
<dbReference type="GO" id="GO:0034045">
    <property type="term" value="C:phagophore assembly site membrane"/>
    <property type="evidence" value="ECO:0000303"/>
    <property type="project" value="ComplexPortal"/>
</dbReference>
<dbReference type="GO" id="GO:0034271">
    <property type="term" value="C:phosphatidylinositol 3-kinase complex, class III, type I"/>
    <property type="evidence" value="ECO:0000314"/>
    <property type="project" value="SGD"/>
</dbReference>
<dbReference type="GO" id="GO:0005774">
    <property type="term" value="C:vacuolar membrane"/>
    <property type="evidence" value="ECO:0000314"/>
    <property type="project" value="SGD"/>
</dbReference>
<dbReference type="GO" id="GO:0042802">
    <property type="term" value="F:identical protein binding"/>
    <property type="evidence" value="ECO:0000353"/>
    <property type="project" value="IntAct"/>
</dbReference>
<dbReference type="GO" id="GO:0005198">
    <property type="term" value="F:structural molecule activity"/>
    <property type="evidence" value="ECO:0000315"/>
    <property type="project" value="SGD"/>
</dbReference>
<dbReference type="GO" id="GO:0006914">
    <property type="term" value="P:autophagy"/>
    <property type="evidence" value="ECO:0000314"/>
    <property type="project" value="ComplexPortal"/>
</dbReference>
<dbReference type="GO" id="GO:0016236">
    <property type="term" value="P:macroautophagy"/>
    <property type="evidence" value="ECO:0000315"/>
    <property type="project" value="SGD"/>
</dbReference>
<dbReference type="GO" id="GO:0046854">
    <property type="term" value="P:phosphatidylinositol phosphate biosynthetic process"/>
    <property type="evidence" value="ECO:0000303"/>
    <property type="project" value="ComplexPortal"/>
</dbReference>
<gene>
    <name evidence="5" type="primary">ATG38</name>
    <name evidence="8" type="ordered locus">YLR211C</name>
    <name type="ORF">L8167.20</name>
</gene>
<name>ATG38_YEAST</name>
<keyword id="KW-0002">3D-structure</keyword>
<keyword id="KW-0007">Acetylation</keyword>
<keyword id="KW-0072">Autophagy</keyword>
<keyword id="KW-0175">Coiled coil</keyword>
<keyword id="KW-0963">Cytoplasm</keyword>
<keyword id="KW-0472">Membrane</keyword>
<keyword id="KW-1185">Reference proteome</keyword>
<accession>Q05789</accession>
<accession>D6VYL2</accession>
<feature type="initiator methionine" description="Removed" evidence="10">
    <location>
        <position position="1"/>
    </location>
</feature>
<feature type="chain" id="PRO_0000203237" description="PtdIns3K complex I subunit atg38">
    <location>
        <begin position="2"/>
        <end position="226"/>
    </location>
</feature>
<feature type="coiled-coil region" evidence="1">
    <location>
        <begin position="52"/>
        <end position="85"/>
    </location>
</feature>
<feature type="coiled-coil region" evidence="1">
    <location>
        <begin position="182"/>
        <end position="209"/>
    </location>
</feature>
<feature type="modified residue" description="N-acetylserine" evidence="10">
    <location>
        <position position="2"/>
    </location>
</feature>
<feature type="helix" evidence="11">
    <location>
        <begin position="125"/>
        <end position="127"/>
    </location>
</feature>
<feature type="helix" evidence="11">
    <location>
        <begin position="129"/>
        <end position="150"/>
    </location>
</feature>
<feature type="helix" evidence="11">
    <location>
        <begin position="156"/>
        <end position="160"/>
    </location>
</feature>
<feature type="helix" evidence="11">
    <location>
        <begin position="164"/>
        <end position="208"/>
    </location>
</feature>
<comment type="function">
    <text evidence="3">Autophagy-related protein required for cytoplasm to vacuole transport (Cvt) and autophagy as a part of the autophagy-specific VPS34 PI3-kinase complex I (PubMed:24165940). This complex is essential to recruit the ATG8-phosphatidylinositol conjugate and the ATG12-ATG5 conjugate to the pre-autophagosomal structure (PubMed:24165940). ATG38 is required for the integrity of the active PI3-kinase complex I by maintaining an association between VPS15-VPS34 and ATG14-VPS30 subcomplexes (PubMed:24165940).</text>
</comment>
<comment type="subunit">
    <text evidence="3 4">Homodimer (PubMed:24165940, PubMed:27630019). Component of the autophagy-specific VPS34 PI3-kinase complex I composed of VPS15, VPS30, VPS34, ATG14 and an ATG38 homodimer (PubMed:24165940, PubMed:27630019). Interacts directly with ATG14 and VPS34 (PubMed:24165940).</text>
</comment>
<comment type="interaction">
    <interactant intactId="EBI-35873">
        <id>Q05789</id>
    </interactant>
    <interactant intactId="EBI-2699">
        <id>P38270</id>
        <label>ATG14</label>
    </interactant>
    <organismsDiffer>false</organismsDiffer>
    <experiments>15</experiments>
</comment>
<comment type="interaction">
    <interactant intactId="EBI-35873">
        <id>Q05789</id>
    </interactant>
    <interactant intactId="EBI-35873">
        <id>Q05789</id>
        <label>ATG38</label>
    </interactant>
    <organismsDiffer>false</organismsDiffer>
    <experiments>3</experiments>
</comment>
<comment type="interaction">
    <interactant intactId="EBI-35873">
        <id>Q05789</id>
    </interactant>
    <interactant intactId="EBI-20405">
        <id>P22543</id>
        <label>VPS34</label>
    </interactant>
    <organismsDiffer>false</organismsDiffer>
    <experiments>5</experiments>
</comment>
<comment type="subcellular location">
    <subcellularLocation>
        <location evidence="2">Cytoplasm</location>
    </subcellularLocation>
    <subcellularLocation>
        <location evidence="3">Preautophagosomal structure membrane</location>
        <topology evidence="7">Peripheral membrane protein</topology>
    </subcellularLocation>
    <text evidence="3">Localization to the preautophagosomal structure requires ATG14.</text>
</comment>
<comment type="domain">
    <text evidence="3 4">The N-terminal region (residues 2-83) bridges the coiled-coil I regions of ATG14 and VPS30 in the base of complex I.</text>
</comment>
<comment type="domain">
    <text evidence="4">The C-terminal region (residues 123-226) is involved in interactions with the PI3-kinase complex I, localization to the PAS and homodimerization.</text>
</comment>
<comment type="similarity">
    <text evidence="6">Belongs to the ATG38 family.</text>
</comment>
<comment type="sequence caution" evidence="6">
    <conflict type="erroneous gene model prediction">
        <sequence resource="EMBL-CDS" id="AAB67441"/>
    </conflict>
</comment>
<reference key="1">
    <citation type="journal article" date="1997" name="Nature">
        <title>The nucleotide sequence of Saccharomyces cerevisiae chromosome XII.</title>
        <authorList>
            <person name="Johnston M."/>
            <person name="Hillier L.W."/>
            <person name="Riles L."/>
            <person name="Albermann K."/>
            <person name="Andre B."/>
            <person name="Ansorge W."/>
            <person name="Benes V."/>
            <person name="Brueckner M."/>
            <person name="Delius H."/>
            <person name="Dubois E."/>
            <person name="Duesterhoeft A."/>
            <person name="Entian K.-D."/>
            <person name="Floeth M."/>
            <person name="Goffeau A."/>
            <person name="Hebling U."/>
            <person name="Heumann K."/>
            <person name="Heuss-Neitzel D."/>
            <person name="Hilbert H."/>
            <person name="Hilger F."/>
            <person name="Kleine K."/>
            <person name="Koetter P."/>
            <person name="Louis E.J."/>
            <person name="Messenguy F."/>
            <person name="Mewes H.-W."/>
            <person name="Miosga T."/>
            <person name="Moestl D."/>
            <person name="Mueller-Auer S."/>
            <person name="Nentwich U."/>
            <person name="Obermaier B."/>
            <person name="Piravandi E."/>
            <person name="Pohl T.M."/>
            <person name="Portetelle D."/>
            <person name="Purnelle B."/>
            <person name="Rechmann S."/>
            <person name="Rieger M."/>
            <person name="Rinke M."/>
            <person name="Rose M."/>
            <person name="Scharfe M."/>
            <person name="Scherens B."/>
            <person name="Scholler P."/>
            <person name="Schwager C."/>
            <person name="Schwarz S."/>
            <person name="Underwood A.P."/>
            <person name="Urrestarazu L.A."/>
            <person name="Vandenbol M."/>
            <person name="Verhasselt P."/>
            <person name="Vierendeels F."/>
            <person name="Voet M."/>
            <person name="Volckaert G."/>
            <person name="Voss H."/>
            <person name="Wambutt R."/>
            <person name="Wedler E."/>
            <person name="Wedler H."/>
            <person name="Zimmermann F.K."/>
            <person name="Zollner A."/>
            <person name="Hani J."/>
            <person name="Hoheisel J.D."/>
        </authorList>
    </citation>
    <scope>NUCLEOTIDE SEQUENCE [LARGE SCALE GENOMIC DNA]</scope>
    <source>
        <strain>ATCC 204508 / S288c</strain>
    </source>
</reference>
<reference key="2">
    <citation type="journal article" date="2014" name="G3 (Bethesda)">
        <title>The reference genome sequence of Saccharomyces cerevisiae: Then and now.</title>
        <authorList>
            <person name="Engel S.R."/>
            <person name="Dietrich F.S."/>
            <person name="Fisk D.G."/>
            <person name="Binkley G."/>
            <person name="Balakrishnan R."/>
            <person name="Costanzo M.C."/>
            <person name="Dwight S.S."/>
            <person name="Hitz B.C."/>
            <person name="Karra K."/>
            <person name="Nash R.S."/>
            <person name="Weng S."/>
            <person name="Wong E.D."/>
            <person name="Lloyd P."/>
            <person name="Skrzypek M.S."/>
            <person name="Miyasato S.R."/>
            <person name="Simison M."/>
            <person name="Cherry J.M."/>
        </authorList>
    </citation>
    <scope>GENOME REANNOTATION</scope>
    <source>
        <strain>ATCC 204508 / S288c</strain>
    </source>
</reference>
<reference key="3">
    <citation type="journal article" date="2000" name="Nucleic Acids Res.">
        <title>Test of intron predictions reveals novel splice sites, alternatively spliced mRNAs and new introns in meiotically regulated genes of yeast.</title>
        <authorList>
            <person name="Davis C.A."/>
            <person name="Grate L."/>
            <person name="Spingola M."/>
            <person name="Ares M. Jr."/>
        </authorList>
    </citation>
    <scope>REVISION OF GENE MODEL</scope>
</reference>
<reference key="4">
    <citation type="journal article" date="2003" name="Nature">
        <title>Global analysis of protein localization in budding yeast.</title>
        <authorList>
            <person name="Huh W.-K."/>
            <person name="Falvo J.V."/>
            <person name="Gerke L.C."/>
            <person name="Carroll A.S."/>
            <person name="Howson R.W."/>
            <person name="Weissman J.S."/>
            <person name="O'Shea E.K."/>
        </authorList>
    </citation>
    <scope>SUBCELLULAR LOCATION [LARGE SCALE ANALYSIS]</scope>
</reference>
<reference key="5">
    <citation type="journal article" date="2012" name="Proc. Natl. Acad. Sci. U.S.A.">
        <title>N-terminal acetylome analyses and functional insights of the N-terminal acetyltransferase NatB.</title>
        <authorList>
            <person name="Van Damme P."/>
            <person name="Lasa M."/>
            <person name="Polevoda B."/>
            <person name="Gazquez C."/>
            <person name="Elosegui-Artola A."/>
            <person name="Kim D.S."/>
            <person name="De Juan-Pardo E."/>
            <person name="Demeyer K."/>
            <person name="Hole K."/>
            <person name="Larrea E."/>
            <person name="Timmerman E."/>
            <person name="Prieto J."/>
            <person name="Arnesen T."/>
            <person name="Sherman F."/>
            <person name="Gevaert K."/>
            <person name="Aldabe R."/>
        </authorList>
    </citation>
    <scope>ACETYLATION [LARGE SCALE ANALYSIS] AT SER-2</scope>
    <scope>CLEAVAGE OF INITIATOR METHIONINE [LARGE SCALE ANALYSIS]</scope>
    <scope>IDENTIFICATION BY MASS SPECTROMETRY [LARGE SCALE ANALYSIS]</scope>
</reference>
<reference key="6">
    <citation type="journal article" date="2013" name="J. Cell Biol.">
        <title>Atg38 is required for autophagy-specific phosphatidylinositol 3-kinase complex integrity.</title>
        <authorList>
            <person name="Araki Y."/>
            <person name="Ku W.C."/>
            <person name="Akioka M."/>
            <person name="May A.I."/>
            <person name="Hayashi Y."/>
            <person name="Arisaka F."/>
            <person name="Ishihama Y."/>
            <person name="Ohsumi Y."/>
        </authorList>
    </citation>
    <scope>IDENTIFICATION BY MASS SPECTROMETRY</scope>
    <scope>IDENTIFICATION IN THE AUTOPHAGY-SPECIFIC VPS34 PI3-KINASE COMPLEX I</scope>
    <scope>INTERACTION WITH ATG14 AND VPS34</scope>
    <scope>SUBUNIT</scope>
    <scope>DOMAIN</scope>
    <scope>SUBCELLULAR LOCATION</scope>
    <scope>FUNCTION</scope>
</reference>
<reference evidence="9" key="7">
    <citation type="journal article" date="2016" name="Autophagy">
        <title>Characterization of Atg38 and NRBF2, a fifth subunit of the autophagic Vps34/PIK3C3 complex.</title>
        <authorList>
            <person name="Ohashi Y."/>
            <person name="Soler N."/>
            <person name="Garcia Ortegon M."/>
            <person name="Zhang L."/>
            <person name="Kirsten M.L."/>
            <person name="Perisic O."/>
            <person name="Masson G.R."/>
            <person name="Burke J.E."/>
            <person name="Jakobi A.J."/>
            <person name="Apostolakis A.A."/>
            <person name="Johnson C.M."/>
            <person name="Ohashi M."/>
            <person name="Ktistakis N.T."/>
            <person name="Sachse C."/>
            <person name="Williams R.L."/>
        </authorList>
    </citation>
    <scope>X-RAY CRYSTALLOGRAPHY (2.20 ANGSTROMS)</scope>
    <scope>SUBUNIT</scope>
    <scope>DOMAIN</scope>
</reference>
<evidence type="ECO:0000255" key="1"/>
<evidence type="ECO:0000269" key="2">
    <source>
    </source>
</evidence>
<evidence type="ECO:0000269" key="3">
    <source>
    </source>
</evidence>
<evidence type="ECO:0000269" key="4">
    <source>
    </source>
</evidence>
<evidence type="ECO:0000303" key="5">
    <source>
    </source>
</evidence>
<evidence type="ECO:0000305" key="6"/>
<evidence type="ECO:0000305" key="7">
    <source>
    </source>
</evidence>
<evidence type="ECO:0000312" key="8">
    <source>
        <dbReference type="SGD" id="S000004201"/>
    </source>
</evidence>
<evidence type="ECO:0007744" key="9">
    <source>
        <dbReference type="PDB" id="5KC1"/>
    </source>
</evidence>
<evidence type="ECO:0007744" key="10">
    <source>
    </source>
</evidence>
<evidence type="ECO:0007829" key="11">
    <source>
        <dbReference type="PDB" id="5KC1"/>
    </source>
</evidence>
<proteinExistence type="evidence at protein level"/>
<sequence length="226" mass="25975">MSTLAEVYTIIEDAEQECRKGDFTNAKAKYQEAIEVLGPQNENLSQNKLSSDVTQAIDLLKQDITAKIQELELLIEKQSSEENNIGMVNNNMLIGSVILNNKSPINGISNARNWDNPAYQDTLSPINDPLLMSILNRLQFNLNNDIQLKTEGGKNSKNSEMKINLRLEQFKKELVLYEQKKFKEYGMKIDEITKENKKLANEIGRLRERWDSLVESAKQRRDKQKN</sequence>
<organism>
    <name type="scientific">Saccharomyces cerevisiae (strain ATCC 204508 / S288c)</name>
    <name type="common">Baker's yeast</name>
    <dbReference type="NCBI Taxonomy" id="559292"/>
    <lineage>
        <taxon>Eukaryota</taxon>
        <taxon>Fungi</taxon>
        <taxon>Dikarya</taxon>
        <taxon>Ascomycota</taxon>
        <taxon>Saccharomycotina</taxon>
        <taxon>Saccharomycetes</taxon>
        <taxon>Saccharomycetales</taxon>
        <taxon>Saccharomycetaceae</taxon>
        <taxon>Saccharomyces</taxon>
    </lineage>
</organism>